<sequence length="147" mass="16699">MQNNEIQPSFLIQKVYTKDVSFETINSPACFKEQWNPSSDFNIDINTTKINDENFELDLTITVTTKNNETNAYIAEVTQSGIFTITSMSEEQIDSVLNTYCANTLFPYAKRIIDSSIIKGGFLPLNLAPINFDAIYLQKKSSPKREH</sequence>
<comment type="function">
    <text evidence="1">One of the proteins required for the normal export of preproteins out of the cell cytoplasm. It is a molecular chaperone that binds to a subset of precursor proteins, maintaining them in a translocation-competent state. It also specifically binds to its receptor SecA.</text>
</comment>
<comment type="subunit">
    <text evidence="1">Homotetramer, a dimer of dimers. One homotetramer interacts with 1 SecA dimer.</text>
</comment>
<comment type="subcellular location">
    <subcellularLocation>
        <location evidence="1">Cytoplasm</location>
    </subcellularLocation>
</comment>
<comment type="similarity">
    <text evidence="1">Belongs to the SecB family.</text>
</comment>
<accession>Q14GB0</accession>
<organism>
    <name type="scientific">Francisella tularensis subsp. tularensis (strain FSC 198)</name>
    <dbReference type="NCBI Taxonomy" id="393115"/>
    <lineage>
        <taxon>Bacteria</taxon>
        <taxon>Pseudomonadati</taxon>
        <taxon>Pseudomonadota</taxon>
        <taxon>Gammaproteobacteria</taxon>
        <taxon>Thiotrichales</taxon>
        <taxon>Francisellaceae</taxon>
        <taxon>Francisella</taxon>
    </lineage>
</organism>
<name>SECB1_FRAT1</name>
<reference key="1">
    <citation type="journal article" date="2007" name="PLoS ONE">
        <title>Genome sequencing shows that European isolates of Francisella tularensis subspecies tularensis are almost identical to US laboratory strain Schu S4.</title>
        <authorList>
            <person name="Chaudhuri R.R."/>
            <person name="Ren C.-P."/>
            <person name="Desmond L."/>
            <person name="Vincent G.A."/>
            <person name="Silman N.J."/>
            <person name="Brehm J.K."/>
            <person name="Elmore M.J."/>
            <person name="Hudson M.J."/>
            <person name="Forsman M."/>
            <person name="Isherwood K.E."/>
            <person name="Gurycova D."/>
            <person name="Minton N.P."/>
            <person name="Titball R.W."/>
            <person name="Pallen M.J."/>
            <person name="Vipond R."/>
        </authorList>
    </citation>
    <scope>NUCLEOTIDE SEQUENCE [LARGE SCALE GENOMIC DNA]</scope>
    <source>
        <strain>FSC 198</strain>
    </source>
</reference>
<proteinExistence type="inferred from homology"/>
<dbReference type="EMBL" id="AM286280">
    <property type="protein sequence ID" value="CAL09516.1"/>
    <property type="molecule type" value="Genomic_DNA"/>
</dbReference>
<dbReference type="SMR" id="Q14GB0"/>
<dbReference type="KEGG" id="ftf:FTF1500"/>
<dbReference type="HOGENOM" id="CLU_111574_1_0_6"/>
<dbReference type="GO" id="GO:0005737">
    <property type="term" value="C:cytoplasm"/>
    <property type="evidence" value="ECO:0007669"/>
    <property type="project" value="UniProtKB-SubCell"/>
</dbReference>
<dbReference type="GO" id="GO:0051082">
    <property type="term" value="F:unfolded protein binding"/>
    <property type="evidence" value="ECO:0007669"/>
    <property type="project" value="InterPro"/>
</dbReference>
<dbReference type="GO" id="GO:0006457">
    <property type="term" value="P:protein folding"/>
    <property type="evidence" value="ECO:0007669"/>
    <property type="project" value="UniProtKB-UniRule"/>
</dbReference>
<dbReference type="GO" id="GO:0051262">
    <property type="term" value="P:protein tetramerization"/>
    <property type="evidence" value="ECO:0007669"/>
    <property type="project" value="InterPro"/>
</dbReference>
<dbReference type="GO" id="GO:0015031">
    <property type="term" value="P:protein transport"/>
    <property type="evidence" value="ECO:0007669"/>
    <property type="project" value="UniProtKB-UniRule"/>
</dbReference>
<dbReference type="Gene3D" id="3.10.420.10">
    <property type="entry name" value="SecB-like"/>
    <property type="match status" value="1"/>
</dbReference>
<dbReference type="HAMAP" id="MF_00821">
    <property type="entry name" value="SecB"/>
    <property type="match status" value="1"/>
</dbReference>
<dbReference type="InterPro" id="IPR003708">
    <property type="entry name" value="SecB"/>
</dbReference>
<dbReference type="InterPro" id="IPR035958">
    <property type="entry name" value="SecB-like_sf"/>
</dbReference>
<dbReference type="NCBIfam" id="NF004391">
    <property type="entry name" value="PRK05751.1-2"/>
    <property type="match status" value="1"/>
</dbReference>
<dbReference type="NCBIfam" id="TIGR00809">
    <property type="entry name" value="secB"/>
    <property type="match status" value="1"/>
</dbReference>
<dbReference type="PANTHER" id="PTHR36918">
    <property type="match status" value="1"/>
</dbReference>
<dbReference type="PANTHER" id="PTHR36918:SF1">
    <property type="entry name" value="PROTEIN-EXPORT PROTEIN SECB"/>
    <property type="match status" value="1"/>
</dbReference>
<dbReference type="Pfam" id="PF02556">
    <property type="entry name" value="SecB"/>
    <property type="match status" value="1"/>
</dbReference>
<dbReference type="PRINTS" id="PR01594">
    <property type="entry name" value="SECBCHAPRONE"/>
</dbReference>
<dbReference type="SUPFAM" id="SSF54611">
    <property type="entry name" value="SecB-like"/>
    <property type="match status" value="1"/>
</dbReference>
<keyword id="KW-0143">Chaperone</keyword>
<keyword id="KW-0963">Cytoplasm</keyword>
<keyword id="KW-0653">Protein transport</keyword>
<keyword id="KW-0811">Translocation</keyword>
<keyword id="KW-0813">Transport</keyword>
<gene>
    <name evidence="1" type="primary">secB1</name>
    <name type="ordered locus">FTF1500</name>
</gene>
<evidence type="ECO:0000255" key="1">
    <source>
        <dbReference type="HAMAP-Rule" id="MF_00821"/>
    </source>
</evidence>
<feature type="chain" id="PRO_0000318234" description="Protein-export protein SecB 1">
    <location>
        <begin position="1"/>
        <end position="147"/>
    </location>
</feature>
<protein>
    <recommendedName>
        <fullName evidence="1">Protein-export protein SecB 1</fullName>
    </recommendedName>
</protein>